<name>SIGF_DICDI</name>
<sequence>MVEINDIIKLYTVHPNLDLIDKNFAEDCEFEAFNIPSFKVKGIEAIHEIFKAIGFYAKDIKISKYNYTHSSHCIVLNTQQEITFNILPFVKFNYRMIINIHKNKENKITKFEEITDLESVIQNIPLANYGYFNIIKPALGYLMVKAGSYNRGFQNNGPNKIQATMERLSDNFVEKKEVNYSEPLIKLSKNFNGVTHQDKIDNMDEELFNSKKIDIKDGSNNAWKKPLNLHQ</sequence>
<proteinExistence type="evidence at transcript level"/>
<dbReference type="EMBL" id="AY392431">
    <property type="protein sequence ID" value="AAQ98873.1"/>
    <property type="molecule type" value="Genomic_DNA"/>
</dbReference>
<dbReference type="EMBL" id="AAFI02000149">
    <property type="protein sequence ID" value="EAL62455.1"/>
    <property type="molecule type" value="Genomic_DNA"/>
</dbReference>
<dbReference type="RefSeq" id="XP_636003.1">
    <property type="nucleotide sequence ID" value="XM_630911.1"/>
</dbReference>
<dbReference type="STRING" id="44689.Q6TMK2"/>
<dbReference type="PaxDb" id="44689-DDB0191278"/>
<dbReference type="EnsemblProtists" id="EAL62455">
    <property type="protein sequence ID" value="EAL62455"/>
    <property type="gene ID" value="DDB_G0289885"/>
</dbReference>
<dbReference type="GeneID" id="8627418"/>
<dbReference type="KEGG" id="ddi:DDB_G0289885"/>
<dbReference type="dictyBase" id="DDB_G0289885">
    <property type="gene designation" value="sigF"/>
</dbReference>
<dbReference type="VEuPathDB" id="AmoebaDB:DDB_G0289885"/>
<dbReference type="eggNOG" id="ENOG502R8A8">
    <property type="taxonomic scope" value="Eukaryota"/>
</dbReference>
<dbReference type="HOGENOM" id="CLU_1201724_0_0_1"/>
<dbReference type="InParanoid" id="Q6TMK2"/>
<dbReference type="OMA" id="HHISIDT"/>
<dbReference type="PRO" id="PR:Q6TMK2"/>
<dbReference type="Proteomes" id="UP000002195">
    <property type="component" value="Chromosome 5"/>
</dbReference>
<dbReference type="GO" id="GO:0006972">
    <property type="term" value="P:hyperosmotic response"/>
    <property type="evidence" value="ECO:0000270"/>
    <property type="project" value="dictyBase"/>
</dbReference>
<dbReference type="InterPro" id="IPR032710">
    <property type="entry name" value="NTF2-like_dom_sf"/>
</dbReference>
<dbReference type="Pfam" id="PF24840">
    <property type="entry name" value="NTF2_SigF"/>
    <property type="match status" value="1"/>
</dbReference>
<dbReference type="SUPFAM" id="SSF54427">
    <property type="entry name" value="NTF2-like"/>
    <property type="match status" value="1"/>
</dbReference>
<reference key="1">
    <citation type="journal article" date="2004" name="Eukaryot. Cell">
        <title>Identification of genes dependent on the MADS box transcription factor SrfA in Dictyostelium discoideum development.</title>
        <authorList>
            <person name="Escalante R."/>
            <person name="Iranfar N."/>
            <person name="Sastre L."/>
            <person name="Loomis W.F."/>
        </authorList>
    </citation>
    <scope>NUCLEOTIDE SEQUENCE [GENOMIC DNA]</scope>
    <scope>DEVELOPMENTAL STAGE</scope>
    <scope>INDUCTION BY SRFA</scope>
</reference>
<reference key="2">
    <citation type="journal article" date="2005" name="Nature">
        <title>The genome of the social amoeba Dictyostelium discoideum.</title>
        <authorList>
            <person name="Eichinger L."/>
            <person name="Pachebat J.A."/>
            <person name="Gloeckner G."/>
            <person name="Rajandream M.A."/>
            <person name="Sucgang R."/>
            <person name="Berriman M."/>
            <person name="Song J."/>
            <person name="Olsen R."/>
            <person name="Szafranski K."/>
            <person name="Xu Q."/>
            <person name="Tunggal B."/>
            <person name="Kummerfeld S."/>
            <person name="Madera M."/>
            <person name="Konfortov B.A."/>
            <person name="Rivero F."/>
            <person name="Bankier A.T."/>
            <person name="Lehmann R."/>
            <person name="Hamlin N."/>
            <person name="Davies R."/>
            <person name="Gaudet P."/>
            <person name="Fey P."/>
            <person name="Pilcher K."/>
            <person name="Chen G."/>
            <person name="Saunders D."/>
            <person name="Sodergren E.J."/>
            <person name="Davis P."/>
            <person name="Kerhornou A."/>
            <person name="Nie X."/>
            <person name="Hall N."/>
            <person name="Anjard C."/>
            <person name="Hemphill L."/>
            <person name="Bason N."/>
            <person name="Farbrother P."/>
            <person name="Desany B."/>
            <person name="Just E."/>
            <person name="Morio T."/>
            <person name="Rost R."/>
            <person name="Churcher C.M."/>
            <person name="Cooper J."/>
            <person name="Haydock S."/>
            <person name="van Driessche N."/>
            <person name="Cronin A."/>
            <person name="Goodhead I."/>
            <person name="Muzny D.M."/>
            <person name="Mourier T."/>
            <person name="Pain A."/>
            <person name="Lu M."/>
            <person name="Harper D."/>
            <person name="Lindsay R."/>
            <person name="Hauser H."/>
            <person name="James K.D."/>
            <person name="Quiles M."/>
            <person name="Madan Babu M."/>
            <person name="Saito T."/>
            <person name="Buchrieser C."/>
            <person name="Wardroper A."/>
            <person name="Felder M."/>
            <person name="Thangavelu M."/>
            <person name="Johnson D."/>
            <person name="Knights A."/>
            <person name="Loulseged H."/>
            <person name="Mungall K.L."/>
            <person name="Oliver K."/>
            <person name="Price C."/>
            <person name="Quail M.A."/>
            <person name="Urushihara H."/>
            <person name="Hernandez J."/>
            <person name="Rabbinowitsch E."/>
            <person name="Steffen D."/>
            <person name="Sanders M."/>
            <person name="Ma J."/>
            <person name="Kohara Y."/>
            <person name="Sharp S."/>
            <person name="Simmonds M.N."/>
            <person name="Spiegler S."/>
            <person name="Tivey A."/>
            <person name="Sugano S."/>
            <person name="White B."/>
            <person name="Walker D."/>
            <person name="Woodward J.R."/>
            <person name="Winckler T."/>
            <person name="Tanaka Y."/>
            <person name="Shaulsky G."/>
            <person name="Schleicher M."/>
            <person name="Weinstock G.M."/>
            <person name="Rosenthal A."/>
            <person name="Cox E.C."/>
            <person name="Chisholm R.L."/>
            <person name="Gibbs R.A."/>
            <person name="Loomis W.F."/>
            <person name="Platzer M."/>
            <person name="Kay R.R."/>
            <person name="Williams J.G."/>
            <person name="Dear P.H."/>
            <person name="Noegel A.A."/>
            <person name="Barrell B.G."/>
            <person name="Kuspa A."/>
        </authorList>
    </citation>
    <scope>NUCLEOTIDE SEQUENCE [LARGE SCALE GENOMIC DNA]</scope>
    <source>
        <strain>AX4</strain>
    </source>
</reference>
<reference key="3">
    <citation type="journal article" date="2007" name="BMC Genomics">
        <title>STATc is a key regulator of the transcriptional response to hyperosmotic shock.</title>
        <authorList>
            <person name="Na J."/>
            <person name="Tunggal B."/>
            <person name="Eichinger L."/>
        </authorList>
    </citation>
    <scope>INDUCTION [LARGE SCALE ANALYSIS]</scope>
</reference>
<reference key="4">
    <citation type="journal article" date="2007" name="Dev. Biol.">
        <title>A GPCR involved in post aggregation events in Dictyostelium discoideum.</title>
        <authorList>
            <person name="Prabhu Y."/>
            <person name="Mondal S."/>
            <person name="Eichinger L."/>
            <person name="Noegel A.A."/>
        </authorList>
    </citation>
    <scope>DEVELOPMENTAL STAGE</scope>
    <scope>INDUCTION [LARGE SCALE ANALYSIS]</scope>
</reference>
<evidence type="ECO:0000269" key="1">
    <source>
    </source>
</evidence>
<evidence type="ECO:0000269" key="2">
    <source>
    </source>
</evidence>
<evidence type="ECO:0000269" key="3">
    <source>
    </source>
</evidence>
<comment type="developmental stage">
    <text evidence="1 3">Expressed late in development.</text>
</comment>
<comment type="induction">
    <text evidence="1 2 3">Induced by srfA, during development. Down-regulated in grlA null-cells at 16 hours of starvation.</text>
</comment>
<protein>
    <recommendedName>
        <fullName>SrfA-induced gene F protein</fullName>
    </recommendedName>
</protein>
<gene>
    <name type="primary">sigF</name>
    <name type="ORF">DDB_G0289885</name>
</gene>
<feature type="chain" id="PRO_0000330367" description="SrfA-induced gene F protein">
    <location>
        <begin position="1"/>
        <end position="231"/>
    </location>
</feature>
<organism>
    <name type="scientific">Dictyostelium discoideum</name>
    <name type="common">Social amoeba</name>
    <dbReference type="NCBI Taxonomy" id="44689"/>
    <lineage>
        <taxon>Eukaryota</taxon>
        <taxon>Amoebozoa</taxon>
        <taxon>Evosea</taxon>
        <taxon>Eumycetozoa</taxon>
        <taxon>Dictyostelia</taxon>
        <taxon>Dictyosteliales</taxon>
        <taxon>Dictyosteliaceae</taxon>
        <taxon>Dictyostelium</taxon>
    </lineage>
</organism>
<keyword id="KW-1185">Reference proteome</keyword>
<accession>Q6TMK2</accession>
<accession>Q54GR6</accession>